<feature type="signal peptide" evidence="1">
    <location>
        <begin position="1"/>
        <end position="23"/>
    </location>
</feature>
<feature type="chain" id="PRO_0000415254" description="EGF-like domain-containing protein 2" evidence="1">
    <location>
        <begin position="24"/>
        <end position="489"/>
    </location>
</feature>
<feature type="domain" description="EGF-like" evidence="2">
    <location>
        <begin position="73"/>
        <end position="109"/>
    </location>
</feature>
<feature type="domain" description="ZP" evidence="3">
    <location>
        <begin position="116"/>
        <end position="370"/>
    </location>
</feature>
<feature type="region of interest" description="Disordered" evidence="4">
    <location>
        <begin position="358"/>
        <end position="389"/>
    </location>
</feature>
<feature type="region of interest" description="Disordered" evidence="4">
    <location>
        <begin position="404"/>
        <end position="425"/>
    </location>
</feature>
<feature type="compositionally biased region" description="Pro residues" evidence="4">
    <location>
        <begin position="363"/>
        <end position="374"/>
    </location>
</feature>
<feature type="compositionally biased region" description="Basic and acidic residues" evidence="4">
    <location>
        <begin position="404"/>
        <end position="420"/>
    </location>
</feature>
<feature type="glycosylation site" description="N-linked (GlcNAc...) asparagine" evidence="1">
    <location>
        <position position="229"/>
    </location>
</feature>
<feature type="glycosylation site" description="N-linked (GlcNAc...) asparagine" evidence="1">
    <location>
        <position position="414"/>
    </location>
</feature>
<feature type="glycosylation site" description="N-linked (GlcNAc...) asparagine" evidence="1">
    <location>
        <position position="479"/>
    </location>
</feature>
<feature type="disulfide bond" evidence="2">
    <location>
        <begin position="77"/>
        <end position="87"/>
    </location>
</feature>
<feature type="disulfide bond" evidence="2">
    <location>
        <begin position="81"/>
        <end position="97"/>
    </location>
</feature>
<feature type="disulfide bond" evidence="2">
    <location>
        <begin position="99"/>
        <end position="108"/>
    </location>
</feature>
<dbReference type="EMBL" id="FC622605">
    <property type="status" value="NOT_ANNOTATED_CDS"/>
    <property type="molecule type" value="mRNA"/>
</dbReference>
<dbReference type="EMBL" id="FC627201">
    <property type="status" value="NOT_ANNOTATED_CDS"/>
    <property type="molecule type" value="mRNA"/>
</dbReference>
<dbReference type="EMBL" id="FC631303">
    <property type="status" value="NOT_ANNOTATED_CDS"/>
    <property type="molecule type" value="mRNA"/>
</dbReference>
<dbReference type="GO" id="GO:0005576">
    <property type="term" value="C:extracellular region"/>
    <property type="evidence" value="ECO:0007669"/>
    <property type="project" value="UniProtKB-SubCell"/>
</dbReference>
<dbReference type="CDD" id="cd00054">
    <property type="entry name" value="EGF_CA"/>
    <property type="match status" value="1"/>
</dbReference>
<dbReference type="Gene3D" id="2.10.25.10">
    <property type="entry name" value="Laminin"/>
    <property type="match status" value="1"/>
</dbReference>
<dbReference type="InterPro" id="IPR051962">
    <property type="entry name" value="Cuticlin"/>
</dbReference>
<dbReference type="InterPro" id="IPR000742">
    <property type="entry name" value="EGF-like_dom"/>
</dbReference>
<dbReference type="InterPro" id="IPR001507">
    <property type="entry name" value="ZP_dom"/>
</dbReference>
<dbReference type="PANTHER" id="PTHR22907">
    <property type="entry name" value="GH04558P"/>
    <property type="match status" value="1"/>
</dbReference>
<dbReference type="PANTHER" id="PTHR22907:SF46">
    <property type="entry name" value="ZP DOMAIN-CONTAINING PROTEIN"/>
    <property type="match status" value="1"/>
</dbReference>
<dbReference type="SMART" id="SM00181">
    <property type="entry name" value="EGF"/>
    <property type="match status" value="2"/>
</dbReference>
<dbReference type="SMART" id="SM00241">
    <property type="entry name" value="ZP"/>
    <property type="match status" value="1"/>
</dbReference>
<dbReference type="SUPFAM" id="SSF57196">
    <property type="entry name" value="EGF/Laminin"/>
    <property type="match status" value="1"/>
</dbReference>
<dbReference type="PROSITE" id="PS00022">
    <property type="entry name" value="EGF_1"/>
    <property type="match status" value="1"/>
</dbReference>
<dbReference type="PROSITE" id="PS50026">
    <property type="entry name" value="EGF_3"/>
    <property type="match status" value="1"/>
</dbReference>
<dbReference type="PROSITE" id="PS51034">
    <property type="entry name" value="ZP_2"/>
    <property type="match status" value="1"/>
</dbReference>
<evidence type="ECO:0000255" key="1"/>
<evidence type="ECO:0000255" key="2">
    <source>
        <dbReference type="PROSITE-ProRule" id="PRU00076"/>
    </source>
</evidence>
<evidence type="ECO:0000255" key="3">
    <source>
        <dbReference type="PROSITE-ProRule" id="PRU00375"/>
    </source>
</evidence>
<evidence type="ECO:0000256" key="4">
    <source>
        <dbReference type="SAM" id="MobiDB-lite"/>
    </source>
</evidence>
<evidence type="ECO:0000269" key="5">
    <source>
    </source>
</evidence>
<evidence type="ECO:0000269" key="6">
    <source ref="1"/>
</evidence>
<evidence type="ECO:0000305" key="7"/>
<protein>
    <recommendedName>
        <fullName>EGF-like domain-containing protein 2</fullName>
    </recommendedName>
    <alternativeName>
        <fullName>Uncharacterized shell protein 24</fullName>
        <shortName>LUSP-24</shortName>
    </alternativeName>
</protein>
<organism>
    <name type="scientific">Lottia gigantea</name>
    <name type="common">Giant owl limpet</name>
    <dbReference type="NCBI Taxonomy" id="225164"/>
    <lineage>
        <taxon>Eukaryota</taxon>
        <taxon>Metazoa</taxon>
        <taxon>Spiralia</taxon>
        <taxon>Lophotrochozoa</taxon>
        <taxon>Mollusca</taxon>
        <taxon>Gastropoda</taxon>
        <taxon>Patellogastropoda</taxon>
        <taxon>Lottioidea</taxon>
        <taxon>Lottiidae</taxon>
        <taxon>Lottia</taxon>
    </lineage>
</organism>
<name>ELDP2_LOTGI</name>
<sequence>MMQTLLRGLCVVVLFWGYIKASADFDCRRTSQTCVTGTCDDVSGSCVCPTDAGGSPSHTNKDCGLELAKVASPATLCDPPCLNGGQCFEPTADTYMCMCSEAFYGSQCENPRKQVECSGDQITINYMPIPTFSGDIFILDNRNTPECAFTEANGMYTATFTYQQCGVITTNDQPNVGDTSYQTSAAVRFNANIERGTDMKLTAECVIDGSGQSNLNNNIGTVSVDQRSNLTEETALTQYQPVSFQLQGKNGNPMPVPVNLGDELRIYIPLADTGKYTKLKITDLTTNNGMAAPDMVTETLIFNGCLTDIGEALVTGDISSDPAIPAIIINFMAFRLRGSPQVKFEAKVKVCEAADTSCEPGSCPTPAPPAPVQPTPSENPGRKRRAASDNEVILHETLTVLDPRSNEKLRLPHNKSDKKSQQNADPQQCLQSTEIMVMVIVLIVAVVLLLVITTCLAVKFMKQRAAQVKIYNSDMPTGNNTVRIPHSAF</sequence>
<reference evidence="7" key="1">
    <citation type="submission" date="2007-12" db="EMBL/GenBank/DDBJ databases">
        <title>DOE Joint Genome Institute Lottia gigantea EST project.</title>
        <authorList>
            <person name="Richardson P."/>
            <person name="Lucas S."/>
            <person name="Rokhsar D."/>
            <person name="Wang M."/>
            <person name="Lindquist E.A."/>
        </authorList>
    </citation>
    <scope>NUCLEOTIDE SEQUENCE [LARGE SCALE MRNA]</scope>
    <scope>IDENTIFICATION</scope>
    <source>
        <tissue evidence="6">Mantle</tissue>
    </source>
</reference>
<reference key="2">
    <citation type="journal article" date="2013" name="FEBS J.">
        <title>The shell-forming proteome of Lottia gigantea reveals both deep conservations and lineage-specific novelties.</title>
        <authorList>
            <person name="Marie B."/>
            <person name="Jackson D.J."/>
            <person name="Ramos-Silva P."/>
            <person name="Zanella-Cleon I."/>
            <person name="Guichard N."/>
            <person name="Marin F."/>
        </authorList>
    </citation>
    <scope>PROTEIN SEQUENCE OF 266-275</scope>
    <scope>SUBCELLULAR LOCATION</scope>
    <scope>TISSUE SPECIFICITY</scope>
    <source>
        <tissue>Shell</tissue>
    </source>
</reference>
<keyword id="KW-0903">Direct protein sequencing</keyword>
<keyword id="KW-1015">Disulfide bond</keyword>
<keyword id="KW-0245">EGF-like domain</keyword>
<keyword id="KW-0325">Glycoprotein</keyword>
<keyword id="KW-0964">Secreted</keyword>
<keyword id="KW-0732">Signal</keyword>
<comment type="subcellular location">
    <subcellularLocation>
        <location evidence="5">Secreted</location>
    </subcellularLocation>
</comment>
<comment type="tissue specificity">
    <text evidence="5">Component of the acid-insoluble organic matrix of calcified layers of the shell (at protein level).</text>
</comment>
<proteinExistence type="evidence at protein level"/>
<accession>B3A0S3</accession>